<name>UXAC_SALA4</name>
<gene>
    <name evidence="1" type="primary">uxaC</name>
    <name type="ordered locus">SeAg_B3309</name>
</gene>
<dbReference type="EC" id="5.3.1.12" evidence="1"/>
<dbReference type="EMBL" id="CP001138">
    <property type="protein sequence ID" value="ACH50840.1"/>
    <property type="molecule type" value="Genomic_DNA"/>
</dbReference>
<dbReference type="RefSeq" id="WP_000190182.1">
    <property type="nucleotide sequence ID" value="NC_011149.1"/>
</dbReference>
<dbReference type="SMR" id="B5F623"/>
<dbReference type="KEGG" id="sea:SeAg_B3309"/>
<dbReference type="HOGENOM" id="CLU_044465_1_0_6"/>
<dbReference type="UniPathway" id="UPA00246"/>
<dbReference type="Proteomes" id="UP000008819">
    <property type="component" value="Chromosome"/>
</dbReference>
<dbReference type="GO" id="GO:0008880">
    <property type="term" value="F:glucuronate isomerase activity"/>
    <property type="evidence" value="ECO:0007669"/>
    <property type="project" value="UniProtKB-UniRule"/>
</dbReference>
<dbReference type="GO" id="GO:0019698">
    <property type="term" value="P:D-galacturonate catabolic process"/>
    <property type="evidence" value="ECO:0007669"/>
    <property type="project" value="TreeGrafter"/>
</dbReference>
<dbReference type="GO" id="GO:0042840">
    <property type="term" value="P:D-glucuronate catabolic process"/>
    <property type="evidence" value="ECO:0007669"/>
    <property type="project" value="TreeGrafter"/>
</dbReference>
<dbReference type="Gene3D" id="3.20.20.140">
    <property type="entry name" value="Metal-dependent hydrolases"/>
    <property type="match status" value="1"/>
</dbReference>
<dbReference type="Gene3D" id="1.10.2020.10">
    <property type="entry name" value="uronate isomerase, domain 2, chain A"/>
    <property type="match status" value="1"/>
</dbReference>
<dbReference type="HAMAP" id="MF_00675">
    <property type="entry name" value="UxaC"/>
    <property type="match status" value="1"/>
</dbReference>
<dbReference type="InterPro" id="IPR032466">
    <property type="entry name" value="Metal_Hydrolase"/>
</dbReference>
<dbReference type="InterPro" id="IPR003766">
    <property type="entry name" value="Uronate_isomerase"/>
</dbReference>
<dbReference type="NCBIfam" id="NF002794">
    <property type="entry name" value="PRK02925.1"/>
    <property type="match status" value="1"/>
</dbReference>
<dbReference type="PANTHER" id="PTHR30068">
    <property type="entry name" value="URONATE ISOMERASE"/>
    <property type="match status" value="1"/>
</dbReference>
<dbReference type="PANTHER" id="PTHR30068:SF4">
    <property type="entry name" value="URONATE ISOMERASE"/>
    <property type="match status" value="1"/>
</dbReference>
<dbReference type="Pfam" id="PF02614">
    <property type="entry name" value="UxaC"/>
    <property type="match status" value="1"/>
</dbReference>
<dbReference type="SUPFAM" id="SSF51556">
    <property type="entry name" value="Metallo-dependent hydrolases"/>
    <property type="match status" value="1"/>
</dbReference>
<proteinExistence type="inferred from homology"/>
<reference key="1">
    <citation type="journal article" date="2011" name="J. Bacteriol.">
        <title>Comparative genomics of 28 Salmonella enterica isolates: evidence for CRISPR-mediated adaptive sublineage evolution.</title>
        <authorList>
            <person name="Fricke W.F."/>
            <person name="Mammel M.K."/>
            <person name="McDermott P.F."/>
            <person name="Tartera C."/>
            <person name="White D.G."/>
            <person name="Leclerc J.E."/>
            <person name="Ravel J."/>
            <person name="Cebula T.A."/>
        </authorList>
    </citation>
    <scope>NUCLEOTIDE SEQUENCE [LARGE SCALE GENOMIC DNA]</scope>
    <source>
        <strain>SL483</strain>
    </source>
</reference>
<evidence type="ECO:0000255" key="1">
    <source>
        <dbReference type="HAMAP-Rule" id="MF_00675"/>
    </source>
</evidence>
<sequence>MATFMTEDFLLKNDIARTLYHKYAAPMPIYDFHCHLSPQEIADDRRFDNLGQIWLEGDHYKWRALRSAGVDESLITGKETSDYEKYMAWANTVPKTLGNPLYHWTHLELRRPFGITGTLFGPDTAESIWTQCNEKLATPAFSARGIMQQMNVRMVGTTDDPIDSLEYHRQIAADDSIDIEVAPSWRPDKVFKIELDGFVDYLRKLEAAADVSITRFDDLRQALTRRLDHFAACGCRASDHGIETLRFAPVPDDAQLDAILGKRLAGETLSELEIAQFTTAVLVWLGRQYAARGWVMQLHIGAIRNNNTRMFRLLGPDTGFDSIGDNNISWALSRLLDSMDVTNELPKTILYCLNPRDNEVLATMIGNFQGPGIAGKVQFGSGWWFNDQKDGMLRQLEQLSQMGLLSQFVGMLTDSRSFLSYTRHEYFRRILCNLLGQWAQDGEIPDDEAMLSRMVQDICFNNAQRYFTIK</sequence>
<comment type="catalytic activity">
    <reaction evidence="1">
        <text>D-glucuronate = D-fructuronate</text>
        <dbReference type="Rhea" id="RHEA:13049"/>
        <dbReference type="ChEBI" id="CHEBI:58720"/>
        <dbReference type="ChEBI" id="CHEBI:59863"/>
        <dbReference type="EC" id="5.3.1.12"/>
    </reaction>
</comment>
<comment type="catalytic activity">
    <reaction evidence="1">
        <text>aldehydo-D-galacturonate = keto-D-tagaturonate</text>
        <dbReference type="Rhea" id="RHEA:27702"/>
        <dbReference type="ChEBI" id="CHEBI:12952"/>
        <dbReference type="ChEBI" id="CHEBI:17886"/>
        <dbReference type="EC" id="5.3.1.12"/>
    </reaction>
</comment>
<comment type="pathway">
    <text evidence="1">Carbohydrate metabolism; pentose and glucuronate interconversion.</text>
</comment>
<comment type="similarity">
    <text evidence="1">Belongs to the metallo-dependent hydrolases superfamily. Uronate isomerase family.</text>
</comment>
<organism>
    <name type="scientific">Salmonella agona (strain SL483)</name>
    <dbReference type="NCBI Taxonomy" id="454166"/>
    <lineage>
        <taxon>Bacteria</taxon>
        <taxon>Pseudomonadati</taxon>
        <taxon>Pseudomonadota</taxon>
        <taxon>Gammaproteobacteria</taxon>
        <taxon>Enterobacterales</taxon>
        <taxon>Enterobacteriaceae</taxon>
        <taxon>Salmonella</taxon>
    </lineage>
</organism>
<keyword id="KW-0413">Isomerase</keyword>
<accession>B5F623</accession>
<feature type="chain" id="PRO_1000131600" description="Uronate isomerase">
    <location>
        <begin position="1"/>
        <end position="470"/>
    </location>
</feature>
<protein>
    <recommendedName>
        <fullName evidence="1">Uronate isomerase</fullName>
        <ecNumber evidence="1">5.3.1.12</ecNumber>
    </recommendedName>
    <alternativeName>
        <fullName evidence="1">Glucuronate isomerase</fullName>
    </alternativeName>
    <alternativeName>
        <fullName evidence="1">Uronic isomerase</fullName>
    </alternativeName>
</protein>